<keyword id="KW-0150">Chloroplast</keyword>
<keyword id="KW-0934">Plastid</keyword>
<keyword id="KW-0687">Ribonucleoprotein</keyword>
<keyword id="KW-0689">Ribosomal protein</keyword>
<keyword id="KW-0694">RNA-binding</keyword>
<keyword id="KW-0699">rRNA-binding</keyword>
<protein>
    <recommendedName>
        <fullName evidence="2">Large ribosomal subunit protein uL1c</fullName>
    </recommendedName>
    <alternativeName>
        <fullName>50S ribosomal protein L1, chloroplastic</fullName>
    </alternativeName>
</protein>
<accession>O78413</accession>
<sequence length="234" mass="25707">MSKVSKRISEVRNKIENKPYKAIEALNLLKDTATAKFVESAEAHIALKLDTKYADQQLRTTLVLPKGTGKKIRIAVIAEGEKATEAINAGADLAGSTDLVQDIMKGMLDFDRLIATPDMMPLIAKLGKVLGPRGLMPSPKSGTVTSDVKSAIEEFKKGKLEYRADKSGIVHISFGKTNFSVNDLLLNLEAVQESIDKNRPAGVKGKYWKSFYICSTMGPSIQLDISEFRDKNFQ</sequence>
<name>RK1_GUITH</name>
<reference key="1">
    <citation type="journal article" date="1999" name="J. Mol. Evol.">
        <title>The plastid genome of the cryptophyte alga, Guillardia theta: complete sequence and conserved synteny groups confirm its common ancestry with red algae.</title>
        <authorList>
            <person name="Douglas S.E."/>
            <person name="Penny S.L."/>
        </authorList>
    </citation>
    <scope>NUCLEOTIDE SEQUENCE [LARGE SCALE GENOMIC DNA]</scope>
</reference>
<dbReference type="EMBL" id="AF041468">
    <property type="protein sequence ID" value="AAC35598.1"/>
    <property type="molecule type" value="Genomic_DNA"/>
</dbReference>
<dbReference type="RefSeq" id="NP_050664.1">
    <property type="nucleotide sequence ID" value="NC_000926.1"/>
</dbReference>
<dbReference type="SMR" id="O78413"/>
<dbReference type="GeneID" id="856950"/>
<dbReference type="HOGENOM" id="CLU_062853_0_0_1"/>
<dbReference type="OMA" id="DNLEFFH"/>
<dbReference type="GO" id="GO:0009507">
    <property type="term" value="C:chloroplast"/>
    <property type="evidence" value="ECO:0007669"/>
    <property type="project" value="UniProtKB-SubCell"/>
</dbReference>
<dbReference type="GO" id="GO:0015934">
    <property type="term" value="C:large ribosomal subunit"/>
    <property type="evidence" value="ECO:0007669"/>
    <property type="project" value="InterPro"/>
</dbReference>
<dbReference type="GO" id="GO:0019843">
    <property type="term" value="F:rRNA binding"/>
    <property type="evidence" value="ECO:0007669"/>
    <property type="project" value="UniProtKB-UniRule"/>
</dbReference>
<dbReference type="GO" id="GO:0003735">
    <property type="term" value="F:structural constituent of ribosome"/>
    <property type="evidence" value="ECO:0007669"/>
    <property type="project" value="InterPro"/>
</dbReference>
<dbReference type="GO" id="GO:0006412">
    <property type="term" value="P:translation"/>
    <property type="evidence" value="ECO:0007669"/>
    <property type="project" value="UniProtKB-UniRule"/>
</dbReference>
<dbReference type="CDD" id="cd00403">
    <property type="entry name" value="Ribosomal_L1"/>
    <property type="match status" value="1"/>
</dbReference>
<dbReference type="FunFam" id="3.40.50.790:FF:000001">
    <property type="entry name" value="50S ribosomal protein L1"/>
    <property type="match status" value="1"/>
</dbReference>
<dbReference type="Gene3D" id="3.30.190.20">
    <property type="match status" value="1"/>
</dbReference>
<dbReference type="Gene3D" id="3.40.50.790">
    <property type="match status" value="1"/>
</dbReference>
<dbReference type="HAMAP" id="MF_01318_B">
    <property type="entry name" value="Ribosomal_uL1_B"/>
    <property type="match status" value="1"/>
</dbReference>
<dbReference type="InterPro" id="IPR005878">
    <property type="entry name" value="Ribosom_uL1_bac-type"/>
</dbReference>
<dbReference type="InterPro" id="IPR002143">
    <property type="entry name" value="Ribosomal_uL1"/>
</dbReference>
<dbReference type="InterPro" id="IPR023674">
    <property type="entry name" value="Ribosomal_uL1-like"/>
</dbReference>
<dbReference type="InterPro" id="IPR028364">
    <property type="entry name" value="Ribosomal_uL1/biogenesis"/>
</dbReference>
<dbReference type="InterPro" id="IPR016095">
    <property type="entry name" value="Ribosomal_uL1_3-a/b-sand"/>
</dbReference>
<dbReference type="InterPro" id="IPR023673">
    <property type="entry name" value="Ribosomal_uL1_CS"/>
</dbReference>
<dbReference type="NCBIfam" id="TIGR01169">
    <property type="entry name" value="rplA_bact"/>
    <property type="match status" value="1"/>
</dbReference>
<dbReference type="PANTHER" id="PTHR36427">
    <property type="entry name" value="54S RIBOSOMAL PROTEIN L1, MITOCHONDRIAL"/>
    <property type="match status" value="1"/>
</dbReference>
<dbReference type="PANTHER" id="PTHR36427:SF3">
    <property type="entry name" value="LARGE RIBOSOMAL SUBUNIT PROTEIN UL1M"/>
    <property type="match status" value="1"/>
</dbReference>
<dbReference type="Pfam" id="PF00687">
    <property type="entry name" value="Ribosomal_L1"/>
    <property type="match status" value="1"/>
</dbReference>
<dbReference type="PIRSF" id="PIRSF002155">
    <property type="entry name" value="Ribosomal_L1"/>
    <property type="match status" value="1"/>
</dbReference>
<dbReference type="SUPFAM" id="SSF56808">
    <property type="entry name" value="Ribosomal protein L1"/>
    <property type="match status" value="1"/>
</dbReference>
<dbReference type="PROSITE" id="PS01199">
    <property type="entry name" value="RIBOSOMAL_L1"/>
    <property type="match status" value="1"/>
</dbReference>
<feature type="chain" id="PRO_0000125789" description="Large ribosomal subunit protein uL1c">
    <location>
        <begin position="1"/>
        <end position="234"/>
    </location>
</feature>
<organism>
    <name type="scientific">Guillardia theta</name>
    <name type="common">Cryptophyte</name>
    <name type="synonym">Cryptomonas phi</name>
    <dbReference type="NCBI Taxonomy" id="55529"/>
    <lineage>
        <taxon>Eukaryota</taxon>
        <taxon>Cryptophyceae</taxon>
        <taxon>Pyrenomonadales</taxon>
        <taxon>Geminigeraceae</taxon>
        <taxon>Guillardia</taxon>
    </lineage>
</organism>
<gene>
    <name type="primary">rpl1</name>
</gene>
<geneLocation type="chloroplast"/>
<comment type="function">
    <text evidence="2">Binds directly to 23S rRNA. Might be involved in E site tRNA release (Potential).</text>
</comment>
<comment type="subunit">
    <text evidence="1">Part of the 50S ribosomal subunit.</text>
</comment>
<comment type="subcellular location">
    <subcellularLocation>
        <location>Plastid</location>
        <location>Chloroplast</location>
    </subcellularLocation>
</comment>
<comment type="similarity">
    <text evidence="2">Belongs to the universal ribosomal protein uL1 family.</text>
</comment>
<evidence type="ECO:0000250" key="1"/>
<evidence type="ECO:0000305" key="2"/>
<proteinExistence type="inferred from homology"/>